<comment type="function">
    <text evidence="1">Probably phosphorylates lipids; the in vivo substrate is unknown.</text>
</comment>
<comment type="cofactor">
    <cofactor evidence="1">
        <name>Mg(2+)</name>
        <dbReference type="ChEBI" id="CHEBI:18420"/>
    </cofactor>
    <cofactor evidence="1">
        <name>Ca(2+)</name>
        <dbReference type="ChEBI" id="CHEBI:29108"/>
    </cofactor>
    <text evidence="1">Binds 1 Mg(2+) ion per subunit. Ca(2+) may be able to substitute.</text>
</comment>
<comment type="subcellular location">
    <subcellularLocation>
        <location evidence="1">Cytoplasm</location>
    </subcellularLocation>
</comment>
<comment type="similarity">
    <text evidence="1">Belongs to the diacylglycerol/lipid kinase family. YegS lipid kinase subfamily.</text>
</comment>
<accession>C4ZSH2</accession>
<evidence type="ECO:0000255" key="1">
    <source>
        <dbReference type="HAMAP-Rule" id="MF_01377"/>
    </source>
</evidence>
<keyword id="KW-0067">ATP-binding</keyword>
<keyword id="KW-0963">Cytoplasm</keyword>
<keyword id="KW-0418">Kinase</keyword>
<keyword id="KW-0444">Lipid biosynthesis</keyword>
<keyword id="KW-0443">Lipid metabolism</keyword>
<keyword id="KW-0460">Magnesium</keyword>
<keyword id="KW-0479">Metal-binding</keyword>
<keyword id="KW-0547">Nucleotide-binding</keyword>
<keyword id="KW-0594">Phospholipid biosynthesis</keyword>
<keyword id="KW-1208">Phospholipid metabolism</keyword>
<keyword id="KW-0808">Transferase</keyword>
<reference key="1">
    <citation type="journal article" date="2009" name="J. Bacteriol.">
        <title>Genomic sequencing reveals regulatory mutations and recombinational events in the widely used MC4100 lineage of Escherichia coli K-12.</title>
        <authorList>
            <person name="Ferenci T."/>
            <person name="Zhou Z."/>
            <person name="Betteridge T."/>
            <person name="Ren Y."/>
            <person name="Liu Y."/>
            <person name="Feng L."/>
            <person name="Reeves P.R."/>
            <person name="Wang L."/>
        </authorList>
    </citation>
    <scope>NUCLEOTIDE SEQUENCE [LARGE SCALE GENOMIC DNA]</scope>
    <source>
        <strain>K12 / MC4100 / BW2952</strain>
    </source>
</reference>
<proteinExistence type="inferred from homology"/>
<name>YEGS_ECOBW</name>
<sequence length="299" mass="32039">MAEFPASLLILNGKSTDNLPLREAIMLLREEGMTIHVRVTWEKGDAARYVEEARKFGVATVIAGGGDGTINEVSTALIQCEGDDIPALGILPLGTANDFATSVGIPEALDKALKLAIAGDAIAIDMAQVNKQTCFINMATGGFGTRITTETPEKLKAALGSVSYIIHGLMRMDTLQPDRCEIRGENFHWQGDALVIGIGNGRQAGGGQQLCPNALINDGLLQLRIFTGDEILPALVSTLKSDEDNPNIIEGASSWFDIQAPHDITFNLDGEPLSGQNFHIEILPAALRCRLPPDCPLLR</sequence>
<organism>
    <name type="scientific">Escherichia coli (strain K12 / MC4100 / BW2952)</name>
    <dbReference type="NCBI Taxonomy" id="595496"/>
    <lineage>
        <taxon>Bacteria</taxon>
        <taxon>Pseudomonadati</taxon>
        <taxon>Pseudomonadota</taxon>
        <taxon>Gammaproteobacteria</taxon>
        <taxon>Enterobacterales</taxon>
        <taxon>Enterobacteriaceae</taxon>
        <taxon>Escherichia</taxon>
    </lineage>
</organism>
<dbReference type="EC" id="2.7.1.-" evidence="1"/>
<dbReference type="EMBL" id="CP001396">
    <property type="protein sequence ID" value="ACR64028.1"/>
    <property type="molecule type" value="Genomic_DNA"/>
</dbReference>
<dbReference type="RefSeq" id="WP_000807348.1">
    <property type="nucleotide sequence ID" value="NC_012759.1"/>
</dbReference>
<dbReference type="SMR" id="C4ZSH2"/>
<dbReference type="KEGG" id="ebw:BWG_1874"/>
<dbReference type="HOGENOM" id="CLU_045532_1_1_6"/>
<dbReference type="GO" id="GO:0005737">
    <property type="term" value="C:cytoplasm"/>
    <property type="evidence" value="ECO:0007669"/>
    <property type="project" value="UniProtKB-SubCell"/>
</dbReference>
<dbReference type="GO" id="GO:0005886">
    <property type="term" value="C:plasma membrane"/>
    <property type="evidence" value="ECO:0007669"/>
    <property type="project" value="TreeGrafter"/>
</dbReference>
<dbReference type="GO" id="GO:0005524">
    <property type="term" value="F:ATP binding"/>
    <property type="evidence" value="ECO:0007669"/>
    <property type="project" value="UniProtKB-UniRule"/>
</dbReference>
<dbReference type="GO" id="GO:0001727">
    <property type="term" value="F:lipid kinase activity"/>
    <property type="evidence" value="ECO:0007669"/>
    <property type="project" value="UniProtKB-UniRule"/>
</dbReference>
<dbReference type="GO" id="GO:0000287">
    <property type="term" value="F:magnesium ion binding"/>
    <property type="evidence" value="ECO:0007669"/>
    <property type="project" value="UniProtKB-UniRule"/>
</dbReference>
<dbReference type="GO" id="GO:0008654">
    <property type="term" value="P:phospholipid biosynthetic process"/>
    <property type="evidence" value="ECO:0007669"/>
    <property type="project" value="UniProtKB-UniRule"/>
</dbReference>
<dbReference type="FunFam" id="2.60.200.40:FF:000008">
    <property type="entry name" value="Probable lipid kinase YegS"/>
    <property type="match status" value="1"/>
</dbReference>
<dbReference type="FunFam" id="3.40.50.10330:FF:000008">
    <property type="entry name" value="Probable lipid kinase YegS"/>
    <property type="match status" value="1"/>
</dbReference>
<dbReference type="Gene3D" id="2.60.200.40">
    <property type="match status" value="1"/>
</dbReference>
<dbReference type="Gene3D" id="3.40.50.10330">
    <property type="entry name" value="Probable inorganic polyphosphate/atp-NAD kinase, domain 1"/>
    <property type="match status" value="1"/>
</dbReference>
<dbReference type="HAMAP" id="MF_01377">
    <property type="entry name" value="YegS"/>
    <property type="match status" value="1"/>
</dbReference>
<dbReference type="InterPro" id="IPR017438">
    <property type="entry name" value="ATP-NAD_kinase_N"/>
</dbReference>
<dbReference type="InterPro" id="IPR005218">
    <property type="entry name" value="Diacylglycerol/lipid_kinase"/>
</dbReference>
<dbReference type="InterPro" id="IPR001206">
    <property type="entry name" value="Diacylglycerol_kinase_cat_dom"/>
</dbReference>
<dbReference type="InterPro" id="IPR022433">
    <property type="entry name" value="Lip_kinase_YegS"/>
</dbReference>
<dbReference type="InterPro" id="IPR050187">
    <property type="entry name" value="Lipid_Phosphate_FormReg"/>
</dbReference>
<dbReference type="InterPro" id="IPR016064">
    <property type="entry name" value="NAD/diacylglycerol_kinase_sf"/>
</dbReference>
<dbReference type="InterPro" id="IPR045540">
    <property type="entry name" value="YegS/DAGK_C"/>
</dbReference>
<dbReference type="NCBIfam" id="TIGR03702">
    <property type="entry name" value="lip_kinase_YegS"/>
    <property type="match status" value="1"/>
</dbReference>
<dbReference type="NCBIfam" id="NF009602">
    <property type="entry name" value="PRK13054.1"/>
    <property type="match status" value="1"/>
</dbReference>
<dbReference type="NCBIfam" id="TIGR00147">
    <property type="entry name" value="YegS/Rv2252/BmrU family lipid kinase"/>
    <property type="match status" value="1"/>
</dbReference>
<dbReference type="PANTHER" id="PTHR12358:SF106">
    <property type="entry name" value="LIPID KINASE YEGS"/>
    <property type="match status" value="1"/>
</dbReference>
<dbReference type="PANTHER" id="PTHR12358">
    <property type="entry name" value="SPHINGOSINE KINASE"/>
    <property type="match status" value="1"/>
</dbReference>
<dbReference type="Pfam" id="PF00781">
    <property type="entry name" value="DAGK_cat"/>
    <property type="match status" value="1"/>
</dbReference>
<dbReference type="Pfam" id="PF19279">
    <property type="entry name" value="YegS_C"/>
    <property type="match status" value="1"/>
</dbReference>
<dbReference type="SMART" id="SM00046">
    <property type="entry name" value="DAGKc"/>
    <property type="match status" value="1"/>
</dbReference>
<dbReference type="SUPFAM" id="SSF111331">
    <property type="entry name" value="NAD kinase/diacylglycerol kinase-like"/>
    <property type="match status" value="1"/>
</dbReference>
<dbReference type="PROSITE" id="PS50146">
    <property type="entry name" value="DAGK"/>
    <property type="match status" value="1"/>
</dbReference>
<gene>
    <name evidence="1" type="primary">yegS</name>
    <name type="ordered locus">BWG_1874</name>
</gene>
<feature type="chain" id="PRO_1000215090" description="Probable lipid kinase YegS">
    <location>
        <begin position="1"/>
        <end position="299"/>
    </location>
</feature>
<feature type="domain" description="DAGKc" evidence="1">
    <location>
        <begin position="2"/>
        <end position="133"/>
    </location>
</feature>
<feature type="active site" description="Proton acceptor" evidence="1">
    <location>
        <position position="271"/>
    </location>
</feature>
<feature type="binding site" evidence="1">
    <location>
        <position position="40"/>
    </location>
    <ligand>
        <name>ATP</name>
        <dbReference type="ChEBI" id="CHEBI:30616"/>
    </ligand>
</feature>
<feature type="binding site" evidence="1">
    <location>
        <begin position="66"/>
        <end position="72"/>
    </location>
    <ligand>
        <name>ATP</name>
        <dbReference type="ChEBI" id="CHEBI:30616"/>
    </ligand>
</feature>
<feature type="binding site" evidence="1">
    <location>
        <position position="95"/>
    </location>
    <ligand>
        <name>ATP</name>
        <dbReference type="ChEBI" id="CHEBI:30616"/>
    </ligand>
</feature>
<feature type="binding site" evidence="1">
    <location>
        <position position="215"/>
    </location>
    <ligand>
        <name>Mg(2+)</name>
        <dbReference type="ChEBI" id="CHEBI:18420"/>
    </ligand>
</feature>
<feature type="binding site" evidence="1">
    <location>
        <position position="218"/>
    </location>
    <ligand>
        <name>Mg(2+)</name>
        <dbReference type="ChEBI" id="CHEBI:18420"/>
    </ligand>
</feature>
<feature type="binding site" evidence="1">
    <location>
        <position position="220"/>
    </location>
    <ligand>
        <name>Mg(2+)</name>
        <dbReference type="ChEBI" id="CHEBI:18420"/>
    </ligand>
</feature>
<protein>
    <recommendedName>
        <fullName evidence="1">Probable lipid kinase YegS</fullName>
        <ecNumber evidence="1">2.7.1.-</ecNumber>
    </recommendedName>
</protein>